<keyword id="KW-1003">Cell membrane</keyword>
<keyword id="KW-0472">Membrane</keyword>
<keyword id="KW-1185">Reference proteome</keyword>
<keyword id="KW-0812">Transmembrane</keyword>
<keyword id="KW-1133">Transmembrane helix</keyword>
<keyword id="KW-0813">Transport</keyword>
<dbReference type="EMBL" id="D85082">
    <property type="protein sequence ID" value="BAA24461.1"/>
    <property type="molecule type" value="Genomic_DNA"/>
</dbReference>
<dbReference type="EMBL" id="AL009126">
    <property type="protein sequence ID" value="CAB12669.1"/>
    <property type="molecule type" value="Genomic_DNA"/>
</dbReference>
<dbReference type="PIR" id="G69804">
    <property type="entry name" value="G69804"/>
</dbReference>
<dbReference type="RefSeq" id="NP_388721.1">
    <property type="nucleotide sequence ID" value="NC_000964.3"/>
</dbReference>
<dbReference type="RefSeq" id="WP_003243108.1">
    <property type="nucleotide sequence ID" value="NZ_OZ025638.1"/>
</dbReference>
<dbReference type="SMR" id="O31563"/>
<dbReference type="FunCoup" id="O31563">
    <property type="interactions" value="68"/>
</dbReference>
<dbReference type="STRING" id="224308.BSU08400"/>
<dbReference type="TCDB" id="2.A.1.3.58">
    <property type="family name" value="the major facilitator superfamily (mfs)"/>
</dbReference>
<dbReference type="PaxDb" id="224308-BSU08400"/>
<dbReference type="EnsemblBacteria" id="CAB12669">
    <property type="protein sequence ID" value="CAB12669"/>
    <property type="gene ID" value="BSU_08400"/>
</dbReference>
<dbReference type="GeneID" id="936182"/>
<dbReference type="KEGG" id="bsu:BSU08400"/>
<dbReference type="PATRIC" id="fig|224308.179.peg.908"/>
<dbReference type="eggNOG" id="COG2814">
    <property type="taxonomic scope" value="Bacteria"/>
</dbReference>
<dbReference type="InParanoid" id="O31563"/>
<dbReference type="OrthoDB" id="9807274at2"/>
<dbReference type="PhylomeDB" id="O31563"/>
<dbReference type="BioCyc" id="BSUB:BSU08400-MONOMER"/>
<dbReference type="Proteomes" id="UP000001570">
    <property type="component" value="Chromosome"/>
</dbReference>
<dbReference type="GO" id="GO:0005886">
    <property type="term" value="C:plasma membrane"/>
    <property type="evidence" value="ECO:0000318"/>
    <property type="project" value="GO_Central"/>
</dbReference>
<dbReference type="GO" id="GO:0022857">
    <property type="term" value="F:transmembrane transporter activity"/>
    <property type="evidence" value="ECO:0000318"/>
    <property type="project" value="GO_Central"/>
</dbReference>
<dbReference type="GO" id="GO:0055085">
    <property type="term" value="P:transmembrane transport"/>
    <property type="evidence" value="ECO:0000318"/>
    <property type="project" value="GO_Central"/>
</dbReference>
<dbReference type="CDD" id="cd17321">
    <property type="entry name" value="MFS_MMR_MDR_like"/>
    <property type="match status" value="1"/>
</dbReference>
<dbReference type="FunFam" id="1.20.1720.10:FF:000048">
    <property type="entry name" value="Uncharacterized MFS-type transporter YfiU"/>
    <property type="match status" value="1"/>
</dbReference>
<dbReference type="Gene3D" id="1.20.1250.20">
    <property type="entry name" value="MFS general substrate transporter like domains"/>
    <property type="match status" value="1"/>
</dbReference>
<dbReference type="Gene3D" id="1.20.1720.10">
    <property type="entry name" value="Multidrug resistance protein D"/>
    <property type="match status" value="1"/>
</dbReference>
<dbReference type="InterPro" id="IPR011701">
    <property type="entry name" value="MFS"/>
</dbReference>
<dbReference type="InterPro" id="IPR020846">
    <property type="entry name" value="MFS_dom"/>
</dbReference>
<dbReference type="InterPro" id="IPR036259">
    <property type="entry name" value="MFS_trans_sf"/>
</dbReference>
<dbReference type="PANTHER" id="PTHR23501">
    <property type="entry name" value="MAJOR FACILITATOR SUPERFAMILY"/>
    <property type="match status" value="1"/>
</dbReference>
<dbReference type="PANTHER" id="PTHR23501:SF190">
    <property type="entry name" value="MAJOR FACILITATOR SUPERFAMILY MFS_1"/>
    <property type="match status" value="1"/>
</dbReference>
<dbReference type="Pfam" id="PF07690">
    <property type="entry name" value="MFS_1"/>
    <property type="match status" value="1"/>
</dbReference>
<dbReference type="PRINTS" id="PR01036">
    <property type="entry name" value="TCRTETB"/>
</dbReference>
<dbReference type="SUPFAM" id="SSF103473">
    <property type="entry name" value="MFS general substrate transporter"/>
    <property type="match status" value="1"/>
</dbReference>
<dbReference type="PROSITE" id="PS50850">
    <property type="entry name" value="MFS"/>
    <property type="match status" value="1"/>
</dbReference>
<comment type="subcellular location">
    <subcellularLocation>
        <location evidence="2">Cell membrane</location>
        <topology evidence="2">Multi-pass membrane protein</topology>
    </subcellularLocation>
</comment>
<comment type="similarity">
    <text evidence="2">Belongs to the major facilitator superfamily. TCR/Tet family.</text>
</comment>
<proteinExistence type="inferred from homology"/>
<sequence length="518" mass="54937">MSEALTEQKSQKWAISLFTIGVFMAALDNGIISAALTTINESFSVSPSWGSWGITLYTLGLSVSVPIVGKLSDRYGRKKLFLIEVCLFGLGSLLVALSQSFPLFLISRLIQALGGGGIFIIGSSHILATLPKEKQGKALGLLGAMNGMAAVLGPNIGSFLLDWTGSWHWLFLINLPIAVLLVVFGACFIAETKAPEAKRLDAAGIFLLSLSILAVMYGMTNLDGANLLHSLGNPEVYGCIIFGILCFAALISYEKRVEMRGGDPILAYSLLRNHMFQRTLIIGLLSGGLLAAVIFIPSYVEQYLGVPAAKAGYWMTPLALASGIGAWLGGALTDKKGPVKTVILSGIISCAGFALFPLWVTEKWEFVIASVAAGIGFGFLLGAPLNVLVSEAAKTNKGTALGTLSLVRQIGLTLAPTLYAGFITAGFDQIGDEINSRLSDSGYSEKAMQMIPEIDSSEVSSLQEQIERIPVPEVKTAISDAIHASVASGYDHLYAAAAVVSLLVIAAISIPAFRRQKR</sequence>
<accession>O31563</accession>
<accession>Q79EW6</accession>
<name>YFIU_BACSU</name>
<organism>
    <name type="scientific">Bacillus subtilis (strain 168)</name>
    <dbReference type="NCBI Taxonomy" id="224308"/>
    <lineage>
        <taxon>Bacteria</taxon>
        <taxon>Bacillati</taxon>
        <taxon>Bacillota</taxon>
        <taxon>Bacilli</taxon>
        <taxon>Bacillales</taxon>
        <taxon>Bacillaceae</taxon>
        <taxon>Bacillus</taxon>
    </lineage>
</organism>
<evidence type="ECO:0000255" key="1"/>
<evidence type="ECO:0000305" key="2"/>
<feature type="chain" id="PRO_0000351511" description="Uncharacterized MFS-type transporter YfiU">
    <location>
        <begin position="1"/>
        <end position="518"/>
    </location>
</feature>
<feature type="transmembrane region" description="Helical" evidence="1">
    <location>
        <begin position="13"/>
        <end position="33"/>
    </location>
</feature>
<feature type="transmembrane region" description="Helical" evidence="1">
    <location>
        <begin position="49"/>
        <end position="69"/>
    </location>
</feature>
<feature type="transmembrane region" description="Helical" evidence="1">
    <location>
        <begin position="86"/>
        <end position="106"/>
    </location>
</feature>
<feature type="transmembrane region" description="Helical" evidence="1">
    <location>
        <begin position="109"/>
        <end position="129"/>
    </location>
</feature>
<feature type="transmembrane region" description="Helical" evidence="1">
    <location>
        <begin position="141"/>
        <end position="161"/>
    </location>
</feature>
<feature type="transmembrane region" description="Helical" evidence="1">
    <location>
        <begin position="169"/>
        <end position="189"/>
    </location>
</feature>
<feature type="transmembrane region" description="Helical" evidence="1">
    <location>
        <begin position="202"/>
        <end position="222"/>
    </location>
</feature>
<feature type="transmembrane region" description="Helical" evidence="1">
    <location>
        <begin position="231"/>
        <end position="251"/>
    </location>
</feature>
<feature type="transmembrane region" description="Helical" evidence="1">
    <location>
        <begin position="280"/>
        <end position="300"/>
    </location>
</feature>
<feature type="transmembrane region" description="Helical" evidence="1">
    <location>
        <begin position="312"/>
        <end position="332"/>
    </location>
</feature>
<feature type="transmembrane region" description="Helical" evidence="1">
    <location>
        <begin position="341"/>
        <end position="361"/>
    </location>
</feature>
<feature type="transmembrane region" description="Helical" evidence="1">
    <location>
        <begin position="365"/>
        <end position="385"/>
    </location>
</feature>
<feature type="transmembrane region" description="Helical" evidence="1">
    <location>
        <begin position="410"/>
        <end position="430"/>
    </location>
</feature>
<feature type="transmembrane region" description="Helical" evidence="1">
    <location>
        <begin position="493"/>
        <end position="513"/>
    </location>
</feature>
<protein>
    <recommendedName>
        <fullName>Uncharacterized MFS-type transporter YfiU</fullName>
    </recommendedName>
</protein>
<reference key="1">
    <citation type="journal article" date="1996" name="DNA Res.">
        <title>Cloning and sequencing of a 27.8-kb nucleotide sequence of the 79 degrees-81 degrees region of the Bacillus subtilis genome containing the sspE locus.</title>
        <authorList>
            <person name="Yamamoto H."/>
            <person name="Uchiyama S."/>
            <person name="Sekiguchi J."/>
        </authorList>
    </citation>
    <scope>NUCLEOTIDE SEQUENCE [GENOMIC DNA]</scope>
</reference>
<reference key="2">
    <citation type="journal article" date="1997" name="Nature">
        <title>The complete genome sequence of the Gram-positive bacterium Bacillus subtilis.</title>
        <authorList>
            <person name="Kunst F."/>
            <person name="Ogasawara N."/>
            <person name="Moszer I."/>
            <person name="Albertini A.M."/>
            <person name="Alloni G."/>
            <person name="Azevedo V."/>
            <person name="Bertero M.G."/>
            <person name="Bessieres P."/>
            <person name="Bolotin A."/>
            <person name="Borchert S."/>
            <person name="Borriss R."/>
            <person name="Boursier L."/>
            <person name="Brans A."/>
            <person name="Braun M."/>
            <person name="Brignell S.C."/>
            <person name="Bron S."/>
            <person name="Brouillet S."/>
            <person name="Bruschi C.V."/>
            <person name="Caldwell B."/>
            <person name="Capuano V."/>
            <person name="Carter N.M."/>
            <person name="Choi S.-K."/>
            <person name="Codani J.-J."/>
            <person name="Connerton I.F."/>
            <person name="Cummings N.J."/>
            <person name="Daniel R.A."/>
            <person name="Denizot F."/>
            <person name="Devine K.M."/>
            <person name="Duesterhoeft A."/>
            <person name="Ehrlich S.D."/>
            <person name="Emmerson P.T."/>
            <person name="Entian K.-D."/>
            <person name="Errington J."/>
            <person name="Fabret C."/>
            <person name="Ferrari E."/>
            <person name="Foulger D."/>
            <person name="Fritz C."/>
            <person name="Fujita M."/>
            <person name="Fujita Y."/>
            <person name="Fuma S."/>
            <person name="Galizzi A."/>
            <person name="Galleron N."/>
            <person name="Ghim S.-Y."/>
            <person name="Glaser P."/>
            <person name="Goffeau A."/>
            <person name="Golightly E.J."/>
            <person name="Grandi G."/>
            <person name="Guiseppi G."/>
            <person name="Guy B.J."/>
            <person name="Haga K."/>
            <person name="Haiech J."/>
            <person name="Harwood C.R."/>
            <person name="Henaut A."/>
            <person name="Hilbert H."/>
            <person name="Holsappel S."/>
            <person name="Hosono S."/>
            <person name="Hullo M.-F."/>
            <person name="Itaya M."/>
            <person name="Jones L.-M."/>
            <person name="Joris B."/>
            <person name="Karamata D."/>
            <person name="Kasahara Y."/>
            <person name="Klaerr-Blanchard M."/>
            <person name="Klein C."/>
            <person name="Kobayashi Y."/>
            <person name="Koetter P."/>
            <person name="Koningstein G."/>
            <person name="Krogh S."/>
            <person name="Kumano M."/>
            <person name="Kurita K."/>
            <person name="Lapidus A."/>
            <person name="Lardinois S."/>
            <person name="Lauber J."/>
            <person name="Lazarevic V."/>
            <person name="Lee S.-M."/>
            <person name="Levine A."/>
            <person name="Liu H."/>
            <person name="Masuda S."/>
            <person name="Mauel C."/>
            <person name="Medigue C."/>
            <person name="Medina N."/>
            <person name="Mellado R.P."/>
            <person name="Mizuno M."/>
            <person name="Moestl D."/>
            <person name="Nakai S."/>
            <person name="Noback M."/>
            <person name="Noone D."/>
            <person name="O'Reilly M."/>
            <person name="Ogawa K."/>
            <person name="Ogiwara A."/>
            <person name="Oudega B."/>
            <person name="Park S.-H."/>
            <person name="Parro V."/>
            <person name="Pohl T.M."/>
            <person name="Portetelle D."/>
            <person name="Porwollik S."/>
            <person name="Prescott A.M."/>
            <person name="Presecan E."/>
            <person name="Pujic P."/>
            <person name="Purnelle B."/>
            <person name="Rapoport G."/>
            <person name="Rey M."/>
            <person name="Reynolds S."/>
            <person name="Rieger M."/>
            <person name="Rivolta C."/>
            <person name="Rocha E."/>
            <person name="Roche B."/>
            <person name="Rose M."/>
            <person name="Sadaie Y."/>
            <person name="Sato T."/>
            <person name="Scanlan E."/>
            <person name="Schleich S."/>
            <person name="Schroeter R."/>
            <person name="Scoffone F."/>
            <person name="Sekiguchi J."/>
            <person name="Sekowska A."/>
            <person name="Seror S.J."/>
            <person name="Serror P."/>
            <person name="Shin B.-S."/>
            <person name="Soldo B."/>
            <person name="Sorokin A."/>
            <person name="Tacconi E."/>
            <person name="Takagi T."/>
            <person name="Takahashi H."/>
            <person name="Takemaru K."/>
            <person name="Takeuchi M."/>
            <person name="Tamakoshi A."/>
            <person name="Tanaka T."/>
            <person name="Terpstra P."/>
            <person name="Tognoni A."/>
            <person name="Tosato V."/>
            <person name="Uchiyama S."/>
            <person name="Vandenbol M."/>
            <person name="Vannier F."/>
            <person name="Vassarotti A."/>
            <person name="Viari A."/>
            <person name="Wambutt R."/>
            <person name="Wedler E."/>
            <person name="Wedler H."/>
            <person name="Weitzenegger T."/>
            <person name="Winters P."/>
            <person name="Wipat A."/>
            <person name="Yamamoto H."/>
            <person name="Yamane K."/>
            <person name="Yasumoto K."/>
            <person name="Yata K."/>
            <person name="Yoshida K."/>
            <person name="Yoshikawa H.-F."/>
            <person name="Zumstein E."/>
            <person name="Yoshikawa H."/>
            <person name="Danchin A."/>
        </authorList>
    </citation>
    <scope>NUCLEOTIDE SEQUENCE [LARGE SCALE GENOMIC DNA]</scope>
    <source>
        <strain>168</strain>
    </source>
</reference>
<gene>
    <name type="primary">yfiU</name>
    <name type="ordered locus">BSU08400</name>
</gene>